<reference key="1">
    <citation type="journal article" date="2007" name="BMC Microbiol.">
        <title>Subtle genetic changes enhance virulence of methicillin resistant and sensitive Staphylococcus aureus.</title>
        <authorList>
            <person name="Highlander S.K."/>
            <person name="Hulten K.G."/>
            <person name="Qin X."/>
            <person name="Jiang H."/>
            <person name="Yerrapragada S."/>
            <person name="Mason E.O. Jr."/>
            <person name="Shang Y."/>
            <person name="Williams T.M."/>
            <person name="Fortunov R.M."/>
            <person name="Liu Y."/>
            <person name="Igboeli O."/>
            <person name="Petrosino J."/>
            <person name="Tirumalai M."/>
            <person name="Uzman A."/>
            <person name="Fox G.E."/>
            <person name="Cardenas A.M."/>
            <person name="Muzny D.M."/>
            <person name="Hemphill L."/>
            <person name="Ding Y."/>
            <person name="Dugan S."/>
            <person name="Blyth P.R."/>
            <person name="Buhay C.J."/>
            <person name="Dinh H.H."/>
            <person name="Hawes A.C."/>
            <person name="Holder M."/>
            <person name="Kovar C.L."/>
            <person name="Lee S.L."/>
            <person name="Liu W."/>
            <person name="Nazareth L.V."/>
            <person name="Wang Q."/>
            <person name="Zhou J."/>
            <person name="Kaplan S.L."/>
            <person name="Weinstock G.M."/>
        </authorList>
    </citation>
    <scope>NUCLEOTIDE SEQUENCE [LARGE SCALE GENOMIC DNA]</scope>
    <source>
        <strain>USA300 / TCH1516</strain>
    </source>
</reference>
<keyword id="KW-1003">Cell membrane</keyword>
<keyword id="KW-0418">Kinase</keyword>
<keyword id="KW-0472">Membrane</keyword>
<keyword id="KW-0598">Phosphotransferase system</keyword>
<keyword id="KW-0762">Sugar transport</keyword>
<keyword id="KW-0808">Transferase</keyword>
<keyword id="KW-0812">Transmembrane</keyword>
<keyword id="KW-1133">Transmembrane helix</keyword>
<keyword id="KW-0813">Transport</keyword>
<dbReference type="EC" id="2.7.1.199" evidence="1"/>
<dbReference type="EMBL" id="CP000730">
    <property type="protein sequence ID" value="ABX28234.1"/>
    <property type="status" value="ALT_INIT"/>
    <property type="molecule type" value="Genomic_DNA"/>
</dbReference>
<dbReference type="RefSeq" id="WP_001227724.1">
    <property type="nucleotide sequence ID" value="NC_010079.1"/>
</dbReference>
<dbReference type="SMR" id="A8Z0F5"/>
<dbReference type="KEGG" id="sax:USA300HOU_0203"/>
<dbReference type="HOGENOM" id="CLU_012312_1_1_9"/>
<dbReference type="PHI-base" id="PHI:6308"/>
<dbReference type="GO" id="GO:0005886">
    <property type="term" value="C:plasma membrane"/>
    <property type="evidence" value="ECO:0007669"/>
    <property type="project" value="UniProtKB-SubCell"/>
</dbReference>
<dbReference type="GO" id="GO:0055056">
    <property type="term" value="F:D-glucose transmembrane transporter activity"/>
    <property type="evidence" value="ECO:0007669"/>
    <property type="project" value="InterPro"/>
</dbReference>
<dbReference type="GO" id="GO:0016301">
    <property type="term" value="F:kinase activity"/>
    <property type="evidence" value="ECO:0007669"/>
    <property type="project" value="UniProtKB-KW"/>
</dbReference>
<dbReference type="GO" id="GO:0008982">
    <property type="term" value="F:protein-N(PI)-phosphohistidine-sugar phosphotransferase activity"/>
    <property type="evidence" value="ECO:0007669"/>
    <property type="project" value="InterPro"/>
</dbReference>
<dbReference type="GO" id="GO:0090563">
    <property type="term" value="F:protein-phosphocysteine-sugar phosphotransferase activity"/>
    <property type="evidence" value="ECO:0007669"/>
    <property type="project" value="TreeGrafter"/>
</dbReference>
<dbReference type="GO" id="GO:1904659">
    <property type="term" value="P:D-glucose transmembrane transport"/>
    <property type="evidence" value="ECO:0007669"/>
    <property type="project" value="InterPro"/>
</dbReference>
<dbReference type="GO" id="GO:0009401">
    <property type="term" value="P:phosphoenolpyruvate-dependent sugar phosphotransferase system"/>
    <property type="evidence" value="ECO:0007669"/>
    <property type="project" value="UniProtKB-KW"/>
</dbReference>
<dbReference type="CDD" id="cd00210">
    <property type="entry name" value="PTS_IIA_glc"/>
    <property type="match status" value="1"/>
</dbReference>
<dbReference type="CDD" id="cd00212">
    <property type="entry name" value="PTS_IIB_glc"/>
    <property type="match status" value="1"/>
</dbReference>
<dbReference type="FunFam" id="2.70.70.10:FF:000001">
    <property type="entry name" value="PTS system glucose-specific IIA component"/>
    <property type="match status" value="1"/>
</dbReference>
<dbReference type="FunFam" id="3.30.1360.60:FF:000001">
    <property type="entry name" value="PTS system glucose-specific IIBC component PtsG"/>
    <property type="match status" value="1"/>
</dbReference>
<dbReference type="Gene3D" id="2.70.70.10">
    <property type="entry name" value="Glucose Permease (Domain IIA)"/>
    <property type="match status" value="1"/>
</dbReference>
<dbReference type="Gene3D" id="3.30.1360.60">
    <property type="entry name" value="Glucose permease domain IIB"/>
    <property type="match status" value="1"/>
</dbReference>
<dbReference type="InterPro" id="IPR011055">
    <property type="entry name" value="Dup_hybrid_motif"/>
</dbReference>
<dbReference type="InterPro" id="IPR036878">
    <property type="entry name" value="Glu_permease_IIB"/>
</dbReference>
<dbReference type="InterPro" id="IPR018113">
    <property type="entry name" value="PTrfase_EIIB_Cys"/>
</dbReference>
<dbReference type="InterPro" id="IPR001127">
    <property type="entry name" value="PTS_EIIA_1_perm"/>
</dbReference>
<dbReference type="InterPro" id="IPR003352">
    <property type="entry name" value="PTS_EIIC"/>
</dbReference>
<dbReference type="InterPro" id="IPR013013">
    <property type="entry name" value="PTS_EIIC_1"/>
</dbReference>
<dbReference type="InterPro" id="IPR050429">
    <property type="entry name" value="PTS_Glucose_EIICBA"/>
</dbReference>
<dbReference type="InterPro" id="IPR001996">
    <property type="entry name" value="PTS_IIB_1"/>
</dbReference>
<dbReference type="InterPro" id="IPR011299">
    <property type="entry name" value="PTS_IIBC_glc"/>
</dbReference>
<dbReference type="NCBIfam" id="TIGR00826">
    <property type="entry name" value="EIIB_glc"/>
    <property type="match status" value="1"/>
</dbReference>
<dbReference type="NCBIfam" id="TIGR00830">
    <property type="entry name" value="PTBA"/>
    <property type="match status" value="1"/>
</dbReference>
<dbReference type="NCBIfam" id="TIGR02002">
    <property type="entry name" value="PTS-II-BC-glcB"/>
    <property type="match status" value="1"/>
</dbReference>
<dbReference type="PANTHER" id="PTHR30009">
    <property type="entry name" value="CYTOCHROME C-TYPE SYNTHESIS PROTEIN AND PTS TRANSMEMBRANE COMPONENT"/>
    <property type="match status" value="1"/>
</dbReference>
<dbReference type="PANTHER" id="PTHR30009:SF20">
    <property type="entry name" value="PTS SYSTEM GLUCOSE-SPECIFIC EIICB COMPONENT-RELATED"/>
    <property type="match status" value="1"/>
</dbReference>
<dbReference type="Pfam" id="PF00358">
    <property type="entry name" value="PTS_EIIA_1"/>
    <property type="match status" value="1"/>
</dbReference>
<dbReference type="Pfam" id="PF00367">
    <property type="entry name" value="PTS_EIIB"/>
    <property type="match status" value="1"/>
</dbReference>
<dbReference type="Pfam" id="PF02378">
    <property type="entry name" value="PTS_EIIC"/>
    <property type="match status" value="1"/>
</dbReference>
<dbReference type="SUPFAM" id="SSF51261">
    <property type="entry name" value="Duplicated hybrid motif"/>
    <property type="match status" value="1"/>
</dbReference>
<dbReference type="SUPFAM" id="SSF55604">
    <property type="entry name" value="Glucose permease domain IIB"/>
    <property type="match status" value="1"/>
</dbReference>
<dbReference type="PROSITE" id="PS51093">
    <property type="entry name" value="PTS_EIIA_TYPE_1"/>
    <property type="match status" value="1"/>
</dbReference>
<dbReference type="PROSITE" id="PS00371">
    <property type="entry name" value="PTS_EIIA_TYPE_1_HIS"/>
    <property type="match status" value="1"/>
</dbReference>
<dbReference type="PROSITE" id="PS51098">
    <property type="entry name" value="PTS_EIIB_TYPE_1"/>
    <property type="match status" value="1"/>
</dbReference>
<dbReference type="PROSITE" id="PS01035">
    <property type="entry name" value="PTS_EIIB_TYPE_1_CYS"/>
    <property type="match status" value="1"/>
</dbReference>
<dbReference type="PROSITE" id="PS51103">
    <property type="entry name" value="PTS_EIIC_TYPE_1"/>
    <property type="match status" value="1"/>
</dbReference>
<name>PTG3C_STAAT</name>
<gene>
    <name type="primary">ptsG</name>
    <name type="synonym">glcA</name>
    <name type="ordered locus">USA300HOU_0203</name>
</gene>
<proteinExistence type="inferred from homology"/>
<organism>
    <name type="scientific">Staphylococcus aureus (strain USA300 / TCH1516)</name>
    <dbReference type="NCBI Taxonomy" id="451516"/>
    <lineage>
        <taxon>Bacteria</taxon>
        <taxon>Bacillati</taxon>
        <taxon>Bacillota</taxon>
        <taxon>Bacilli</taxon>
        <taxon>Bacillales</taxon>
        <taxon>Staphylococcaceae</taxon>
        <taxon>Staphylococcus</taxon>
    </lineage>
</organism>
<evidence type="ECO:0000250" key="1">
    <source>
        <dbReference type="UniProtKB" id="Q57071"/>
    </source>
</evidence>
<evidence type="ECO:0000255" key="2">
    <source>
        <dbReference type="PROSITE-ProRule" id="PRU00416"/>
    </source>
</evidence>
<evidence type="ECO:0000255" key="3">
    <source>
        <dbReference type="PROSITE-ProRule" id="PRU00421"/>
    </source>
</evidence>
<evidence type="ECO:0000255" key="4">
    <source>
        <dbReference type="PROSITE-ProRule" id="PRU00426"/>
    </source>
</evidence>
<evidence type="ECO:0000305" key="5"/>
<protein>
    <recommendedName>
        <fullName evidence="1">PTS system glucose-specific EIICBA component</fullName>
        <ecNumber evidence="1">2.7.1.199</ecNumber>
    </recommendedName>
    <alternativeName>
        <fullName evidence="1">EIICBA-Glc</fullName>
        <shortName evidence="1">EII-Glc</shortName>
    </alternativeName>
    <alternativeName>
        <fullName evidence="5">EIICBA-Glc 1</fullName>
    </alternativeName>
    <domain>
        <recommendedName>
            <fullName evidence="1">Glucose permease IIC component</fullName>
        </recommendedName>
        <alternativeName>
            <fullName evidence="1">PTS system glucose-specific EIIC component</fullName>
        </alternativeName>
    </domain>
    <domain>
        <recommendedName>
            <fullName evidence="1">Glucose-specific phosphotransferase enzyme IIB component</fullName>
        </recommendedName>
        <alternativeName>
            <fullName evidence="1">PTS system glucose-specific EIIB component</fullName>
        </alternativeName>
    </domain>
    <domain>
        <recommendedName>
            <fullName evidence="1">Glucose-specific phosphotransferase enzyme IIA component</fullName>
        </recommendedName>
        <alternativeName>
            <fullName evidence="1">PTS system glucose-specific EIIA component</fullName>
        </alternativeName>
    </domain>
</protein>
<comment type="function">
    <text evidence="1">The phosphoenolpyruvate-dependent sugar phosphotransferase system (sugar PTS), a major carbohydrate active transport system, catalyzes the phosphorylation of incoming sugar substrates concomitantly with their translocation across the cell membrane. This system is involved in glucose transport.</text>
</comment>
<comment type="catalytic activity">
    <reaction evidence="1">
        <text>N(pros)-phospho-L-histidyl-[protein] + D-glucose(out) = D-glucose 6-phosphate(in) + L-histidyl-[protein]</text>
        <dbReference type="Rhea" id="RHEA:33367"/>
        <dbReference type="Rhea" id="RHEA-COMP:9745"/>
        <dbReference type="Rhea" id="RHEA-COMP:9746"/>
        <dbReference type="ChEBI" id="CHEBI:4167"/>
        <dbReference type="ChEBI" id="CHEBI:29979"/>
        <dbReference type="ChEBI" id="CHEBI:61548"/>
        <dbReference type="ChEBI" id="CHEBI:64837"/>
        <dbReference type="EC" id="2.7.1.199"/>
    </reaction>
</comment>
<comment type="subcellular location">
    <subcellularLocation>
        <location evidence="4">Cell membrane</location>
        <topology evidence="4">Multi-pass membrane protein</topology>
    </subcellularLocation>
</comment>
<comment type="domain">
    <text evidence="4">The EIIC domain forms the PTS system translocation channel and contains the specific substrate-binding site.</text>
</comment>
<comment type="domain">
    <text evidence="3">The EIIB domain is phosphorylated by phospho-EIIA on a cysteinyl or histidyl residue, depending on the transported sugar. Then, it transfers the phosphoryl group to the sugar substrate concomitantly with the sugar uptake processed by the EIIC domain.</text>
</comment>
<comment type="domain">
    <text evidence="2">The EIIA domain is phosphorylated by phospho-HPr on a histidyl residue. Then, it transfers the phosphoryl group to the EIIB domain.</text>
</comment>
<comment type="sequence caution" evidence="5">
    <conflict type="erroneous initiation">
        <sequence resource="EMBL-CDS" id="ABX28234"/>
    </conflict>
</comment>
<feature type="chain" id="PRO_0000351399" description="PTS system glucose-specific EIICBA component">
    <location>
        <begin position="1"/>
        <end position="681"/>
    </location>
</feature>
<feature type="transmembrane region" description="Helical" evidence="4">
    <location>
        <begin position="16"/>
        <end position="36"/>
    </location>
</feature>
<feature type="transmembrane region" description="Helical" evidence="4">
    <location>
        <begin position="73"/>
        <end position="93"/>
    </location>
</feature>
<feature type="transmembrane region" description="Helical" evidence="4">
    <location>
        <begin position="126"/>
        <end position="146"/>
    </location>
</feature>
<feature type="transmembrane region" description="Helical" evidence="4">
    <location>
        <begin position="170"/>
        <end position="190"/>
    </location>
</feature>
<feature type="transmembrane region" description="Helical" evidence="4">
    <location>
        <begin position="199"/>
        <end position="219"/>
    </location>
</feature>
<feature type="transmembrane region" description="Helical" evidence="4">
    <location>
        <begin position="273"/>
        <end position="293"/>
    </location>
</feature>
<feature type="transmembrane region" description="Helical" evidence="4">
    <location>
        <begin position="303"/>
        <end position="323"/>
    </location>
</feature>
<feature type="transmembrane region" description="Helical" evidence="4">
    <location>
        <begin position="328"/>
        <end position="348"/>
    </location>
</feature>
<feature type="transmembrane region" description="Helical" evidence="4">
    <location>
        <begin position="355"/>
        <end position="375"/>
    </location>
</feature>
<feature type="transmembrane region" description="Helical" evidence="4">
    <location>
        <begin position="383"/>
        <end position="403"/>
    </location>
</feature>
<feature type="domain" description="PTS EIIC type-1" evidence="4">
    <location>
        <begin position="3"/>
        <end position="414"/>
    </location>
</feature>
<feature type="domain" description="PTS EIIB type-1" evidence="3">
    <location>
        <begin position="425"/>
        <end position="506"/>
    </location>
</feature>
<feature type="domain" description="PTS EIIA type-1" evidence="2">
    <location>
        <begin position="551"/>
        <end position="655"/>
    </location>
</feature>
<feature type="active site" description="Phosphocysteine intermediate; for EIIB activity" evidence="3">
    <location>
        <position position="447"/>
    </location>
</feature>
<feature type="active site" description="Tele-phosphohistidine intermediate; for EIIA activity" evidence="2">
    <location>
        <position position="603"/>
    </location>
</feature>
<accession>A8Z0F5</accession>
<sequence length="681" mass="73925">MRKKLFGQLQRIGKALMLPVAILPAAGLLLAIGTAMQGESLQHYLPFIQNGGVQTVAKLMTGAGGIIFDNLPMIFALGVAIGLAGGDGVAAIAAFVGYIIMNKTMGDFLQVTPKNIGDPASGYASILGIPTLQTGVFGGIIIGALAAWCYNKFYNINLPSYLGFFAGKRFVPIMMATTSFILAFPMALIWPTIQSGLNAFSTGLLDSNTGVAVFLFGFIKRLLIPFGLHHIFHAPFWFEFGSWKNAAGEIIHGDQRIFIEQIREGAHLTAGKFMQGEFPVMMFGLPAAALAIYHTAKPENKKVVAGLMGSAALTSFLTGITEPLEFSFLFVAPLLFFIHAVLDGLSFLTLYLLDLHLGYTFSGGFIDYFLLGILPNKTQWWLVIPVGLVYAVIYYFVFRFLIVKLKYKTPGREDKQSQAATASATELPYAVLEAMGGKANIKHLDACITRLRVEVNDKSKVDVPGLKDLGASGVLEVGNNMQAIFGPKSDQIKHEMQQIMNGQVVENPTTMEDDKDETVVVAEDKSATSELSHIVHAPLTGEVTPLSEVPDQVFSEKMMGDGIAIKPSQGEVRAPFNGKVQMIFPTKHAIGLVSDSGLELLIHIGLDTVKLNGEGFTLHVEEGQEVKQGDLLINFDLDYIRNHAKSDITPIIVTQGNITNLDFKQGEHGNISFGDQLFEAK</sequence>